<protein>
    <recommendedName>
        <fullName evidence="9">Histone-lysine N-methyltransferase KMT5C</fullName>
    </recommendedName>
    <alternativeName>
        <fullName evidence="1">Lysine-specific methyltransferase 5C</fullName>
    </alternativeName>
    <alternativeName>
        <fullName>Suppressor of variegation 4-20 homolog 2</fullName>
        <shortName>Su(var)4-20 homolog 2</shortName>
        <shortName>Suv4-20h2</shortName>
    </alternativeName>
    <alternativeName>
        <fullName evidence="9">[histone H4]-N-methyl-L-lysine20 N-methyltransferase KMT5B</fullName>
        <ecNumber evidence="4 7 8">2.1.1.362</ecNumber>
    </alternativeName>
    <alternativeName>
        <fullName evidence="9">[histone H4]-lysine20 N-methyltransferase KMT5B</fullName>
        <ecNumber evidence="1">2.1.1.361</ecNumber>
    </alternativeName>
</protein>
<keyword id="KW-0002">3D-structure</keyword>
<keyword id="KW-0156">Chromatin regulator</keyword>
<keyword id="KW-0158">Chromosome</keyword>
<keyword id="KW-0479">Metal-binding</keyword>
<keyword id="KW-0489">Methyltransferase</keyword>
<keyword id="KW-0539">Nucleus</keyword>
<keyword id="KW-1185">Reference proteome</keyword>
<keyword id="KW-0678">Repressor</keyword>
<keyword id="KW-0949">S-adenosyl-L-methionine</keyword>
<keyword id="KW-0804">Transcription</keyword>
<keyword id="KW-0805">Transcription regulation</keyword>
<keyword id="KW-0808">Transferase</keyword>
<keyword id="KW-0862">Zinc</keyword>
<proteinExistence type="evidence at protein level"/>
<comment type="function">
    <text evidence="1 4 5 6 8">Histone methyltransferase that specifically methylates monomethylated 'Lys-20' (H4K20me1) and dimethylated 'Lys-20' (H4K20me2) of histone H4 to produce respectively dimethylated 'Lys-20' (H4K20me2) and trimethylated 'Lys-20' (H4K20me3) and thus regulates transcription and maintenance of genome integrity (PubMed:15145825, PubMed:28114273). In vitro also methylates unmodified 'Lys-20' (H4K20me0) of histone H4 and nucleosomes (By similarity). H4 'Lys-20' trimethylation represents a specific tag for epigenetic transcriptional repression (PubMed:15145825). Mainly functions in pericentric heterochromatin regions, thereby playing a central role in the establishment of constitutive heterochromatin in these regions (PubMed:15145825). KMT5B is targeted to histone H3 via its interaction with RB1 family proteins (RB1, RBL1 and RBL2) (PubMed:15750587, PubMed:16612004). Facilitates TP53BP1 foci formation upon DNA damage and proficient non-homologous end-joining (NHEJ)-directed DNA repair by catalyzing the di- and trimethylation of 'Lys-20' of histone H4 (By similarity). May play a role in class switch reconbination by catalyzing the di- and trimethylation of 'Lys-20' of histone H4 (PubMed:28114273).</text>
</comment>
<comment type="catalytic activity">
    <reaction evidence="4 7 8">
        <text>N(6)-methyl-L-lysyl(20)-[histone H4] + S-adenosyl-L-methionine = N(6),N(6)-dimethyl-L-lysyl(20)-[histone H4] + S-adenosyl-L-homocysteine + H(+)</text>
        <dbReference type="Rhea" id="RHEA:60348"/>
        <dbReference type="Rhea" id="RHEA-COMP:15555"/>
        <dbReference type="Rhea" id="RHEA-COMP:15556"/>
        <dbReference type="ChEBI" id="CHEBI:15378"/>
        <dbReference type="ChEBI" id="CHEBI:57856"/>
        <dbReference type="ChEBI" id="CHEBI:59789"/>
        <dbReference type="ChEBI" id="CHEBI:61929"/>
        <dbReference type="ChEBI" id="CHEBI:61976"/>
        <dbReference type="EC" id="2.1.1.362"/>
    </reaction>
    <physiologicalReaction direction="left-to-right" evidence="8">
        <dbReference type="Rhea" id="RHEA:60349"/>
    </physiologicalReaction>
</comment>
<comment type="catalytic activity">
    <reaction evidence="4 8">
        <text>N(6),N(6)-dimethyl-L-lysyl(20)-[histone H4] + S-adenosyl-L-methionine = N(6),N(6),N(6)-trimethyl-L-lysyl(20)-[histone H4] + S-adenosyl-L-homocysteine + H(+)</text>
        <dbReference type="Rhea" id="RHEA:61992"/>
        <dbReference type="Rhea" id="RHEA-COMP:15556"/>
        <dbReference type="Rhea" id="RHEA-COMP:15998"/>
        <dbReference type="ChEBI" id="CHEBI:15378"/>
        <dbReference type="ChEBI" id="CHEBI:57856"/>
        <dbReference type="ChEBI" id="CHEBI:59789"/>
        <dbReference type="ChEBI" id="CHEBI:61961"/>
        <dbReference type="ChEBI" id="CHEBI:61976"/>
    </reaction>
    <physiologicalReaction direction="left-to-right" evidence="8">
        <dbReference type="Rhea" id="RHEA:61993"/>
    </physiologicalReaction>
</comment>
<comment type="catalytic activity">
    <reaction evidence="1">
        <text>L-lysyl(20)-[histone H4] + S-adenosyl-L-methionine = N(6)-methyl-L-lysyl(20)-[histone H4] + S-adenosyl-L-homocysteine + H(+)</text>
        <dbReference type="Rhea" id="RHEA:60344"/>
        <dbReference type="Rhea" id="RHEA-COMP:15554"/>
        <dbReference type="Rhea" id="RHEA-COMP:15555"/>
        <dbReference type="ChEBI" id="CHEBI:15378"/>
        <dbReference type="ChEBI" id="CHEBI:29969"/>
        <dbReference type="ChEBI" id="CHEBI:57856"/>
        <dbReference type="ChEBI" id="CHEBI:59789"/>
        <dbReference type="ChEBI" id="CHEBI:61929"/>
        <dbReference type="EC" id="2.1.1.361"/>
    </reaction>
</comment>
<comment type="activity regulation">
    <text evidence="1">Inhibited by 6,7-Dichloro-N-cyclopentyl-4-(pyridin-4-yl)phthalazin-1-amine (A-196).</text>
</comment>
<comment type="biophysicochemical properties">
    <kinetics>
        <KM evidence="7">510 uM for histone H4K20me1 peptide</KM>
    </kinetics>
</comment>
<comment type="subunit">
    <text evidence="4 5 6 7">Homodimer (PubMed:24049080). Interacts with HP1 proteins CBX1, CBX3 and CBX5. Interacts with RB1 family proteins RB1, RBL1 and RBL2.</text>
</comment>
<comment type="subcellular location">
    <subcellularLocation>
        <location evidence="4">Nucleus</location>
    </subcellularLocation>
    <subcellularLocation>
        <location evidence="4">Chromosome</location>
    </subcellularLocation>
    <text>Associated with pericentric heterochromatin. CBX1 and CBX5 are required for the localization to pericentric heterochromatin.</text>
</comment>
<comment type="similarity">
    <text evidence="3">Belongs to the class V-like SAM-binding methyltransferase superfamily. Histone-lysine methyltransferase family. Suvar4-20 subfamily.</text>
</comment>
<comment type="sequence caution" evidence="9">
    <conflict type="erroneous initiation">
        <sequence resource="EMBL-CDS" id="AAH24816"/>
    </conflict>
</comment>
<comment type="sequence caution" evidence="9">
    <conflict type="erroneous initiation">
        <sequence resource="EMBL-CDS" id="AAH85473"/>
    </conflict>
</comment>
<dbReference type="EC" id="2.1.1.362" evidence="4 7 8"/>
<dbReference type="EC" id="2.1.1.361" evidence="1"/>
<dbReference type="EMBL" id="AY555193">
    <property type="protein sequence ID" value="AAT00540.1"/>
    <property type="molecule type" value="mRNA"/>
</dbReference>
<dbReference type="EMBL" id="AK154848">
    <property type="protein sequence ID" value="BAE32874.1"/>
    <property type="molecule type" value="mRNA"/>
</dbReference>
<dbReference type="EMBL" id="BC024816">
    <property type="protein sequence ID" value="AAH24816.1"/>
    <property type="status" value="ALT_INIT"/>
    <property type="molecule type" value="mRNA"/>
</dbReference>
<dbReference type="EMBL" id="BC085473">
    <property type="protein sequence ID" value="AAH85473.2"/>
    <property type="status" value="ALT_INIT"/>
    <property type="molecule type" value="mRNA"/>
</dbReference>
<dbReference type="CCDS" id="CCDS20743.2"/>
<dbReference type="RefSeq" id="NP_001108490.1">
    <property type="nucleotide sequence ID" value="NM_001115018.2"/>
</dbReference>
<dbReference type="RefSeq" id="NP_001344973.1">
    <property type="nucleotide sequence ID" value="NM_001358044.2"/>
</dbReference>
<dbReference type="RefSeq" id="NP_666289.2">
    <property type="nucleotide sequence ID" value="NM_146177.3"/>
</dbReference>
<dbReference type="RefSeq" id="XP_006539837.1">
    <property type="nucleotide sequence ID" value="XM_006539774.1"/>
</dbReference>
<dbReference type="PDB" id="4AU7">
    <property type="method" value="X-ray"/>
    <property type="resolution" value="2.07 A"/>
    <property type="chains" value="A/B=1-246"/>
</dbReference>
<dbReference type="PDBsum" id="4AU7"/>
<dbReference type="SMR" id="Q6Q783"/>
<dbReference type="BioGRID" id="231299">
    <property type="interactions" value="3"/>
</dbReference>
<dbReference type="FunCoup" id="Q6Q783">
    <property type="interactions" value="1012"/>
</dbReference>
<dbReference type="STRING" id="10090.ENSMUSP00000104223"/>
<dbReference type="GlyGen" id="Q6Q783">
    <property type="glycosylation" value="1 site"/>
</dbReference>
<dbReference type="iPTMnet" id="Q6Q783"/>
<dbReference type="PhosphoSitePlus" id="Q6Q783"/>
<dbReference type="jPOST" id="Q6Q783"/>
<dbReference type="PaxDb" id="10090-ENSMUSP00000104223"/>
<dbReference type="PeptideAtlas" id="Q6Q783"/>
<dbReference type="ProteomicsDB" id="264788"/>
<dbReference type="Antibodypedia" id="46420">
    <property type="antibodies" value="82 antibodies from 21 providers"/>
</dbReference>
<dbReference type="DNASU" id="232811"/>
<dbReference type="Ensembl" id="ENSMUST00000098853.9">
    <property type="protein sequence ID" value="ENSMUSP00000096452.3"/>
    <property type="gene ID" value="ENSMUSG00000059851.16"/>
</dbReference>
<dbReference type="Ensembl" id="ENSMUST00000108582.10">
    <property type="protein sequence ID" value="ENSMUSP00000104223.4"/>
    <property type="gene ID" value="ENSMUSG00000059851.16"/>
</dbReference>
<dbReference type="Ensembl" id="ENSMUST00000108583.9">
    <property type="protein sequence ID" value="ENSMUSP00000104224.3"/>
    <property type="gene ID" value="ENSMUSG00000059851.16"/>
</dbReference>
<dbReference type="GeneID" id="232811"/>
<dbReference type="KEGG" id="mmu:232811"/>
<dbReference type="UCSC" id="uc009eyi.2">
    <property type="organism name" value="mouse"/>
</dbReference>
<dbReference type="AGR" id="MGI:2385262"/>
<dbReference type="CTD" id="84787"/>
<dbReference type="MGI" id="MGI:2385262">
    <property type="gene designation" value="Kmt5c"/>
</dbReference>
<dbReference type="VEuPathDB" id="HostDB:ENSMUSG00000059851"/>
<dbReference type="eggNOG" id="KOG2589">
    <property type="taxonomic scope" value="Eukaryota"/>
</dbReference>
<dbReference type="GeneTree" id="ENSGT00940000161700"/>
<dbReference type="HOGENOM" id="CLU_040002_0_0_1"/>
<dbReference type="InParanoid" id="Q6Q783"/>
<dbReference type="OMA" id="GCGPHCC"/>
<dbReference type="OrthoDB" id="6627536at2759"/>
<dbReference type="PhylomeDB" id="Q6Q783"/>
<dbReference type="TreeFam" id="TF106433"/>
<dbReference type="Reactome" id="R-MMU-3214841">
    <property type="pathway name" value="PKMTs methylate histone lysines"/>
</dbReference>
<dbReference type="BioGRID-ORCS" id="232811">
    <property type="hits" value="3 hits in 82 CRISPR screens"/>
</dbReference>
<dbReference type="ChiTaRS" id="Suv420h2">
    <property type="organism name" value="mouse"/>
</dbReference>
<dbReference type="EvolutionaryTrace" id="Q6Q783"/>
<dbReference type="PRO" id="PR:Q6Q783"/>
<dbReference type="Proteomes" id="UP000000589">
    <property type="component" value="Chromosome 7"/>
</dbReference>
<dbReference type="RNAct" id="Q6Q783">
    <property type="molecule type" value="protein"/>
</dbReference>
<dbReference type="Bgee" id="ENSMUSG00000059851">
    <property type="expression patterns" value="Expressed in retinal neural layer and 255 other cell types or tissues"/>
</dbReference>
<dbReference type="ExpressionAtlas" id="Q6Q783">
    <property type="expression patterns" value="baseline and differential"/>
</dbReference>
<dbReference type="GO" id="GO:0000779">
    <property type="term" value="C:condensed chromosome, centromeric region"/>
    <property type="evidence" value="ECO:0000314"/>
    <property type="project" value="MGI"/>
</dbReference>
<dbReference type="GO" id="GO:0005654">
    <property type="term" value="C:nucleoplasm"/>
    <property type="evidence" value="ECO:0007669"/>
    <property type="project" value="Ensembl"/>
</dbReference>
<dbReference type="GO" id="GO:0005721">
    <property type="term" value="C:pericentric heterochromatin"/>
    <property type="evidence" value="ECO:0007669"/>
    <property type="project" value="Ensembl"/>
</dbReference>
<dbReference type="GO" id="GO:0003682">
    <property type="term" value="F:chromatin binding"/>
    <property type="evidence" value="ECO:0000250"/>
    <property type="project" value="UniProtKB"/>
</dbReference>
<dbReference type="GO" id="GO:0042393">
    <property type="term" value="F:histone binding"/>
    <property type="evidence" value="ECO:0000314"/>
    <property type="project" value="UniProtKB"/>
</dbReference>
<dbReference type="GO" id="GO:0042799">
    <property type="term" value="F:histone H4K20 methyltransferase activity"/>
    <property type="evidence" value="ECO:0000314"/>
    <property type="project" value="MGI"/>
</dbReference>
<dbReference type="GO" id="GO:0140944">
    <property type="term" value="F:histone H4K20 monomethyltransferase activity"/>
    <property type="evidence" value="ECO:0007669"/>
    <property type="project" value="UniProtKB-EC"/>
</dbReference>
<dbReference type="GO" id="GO:0140941">
    <property type="term" value="F:histone H4K20me methyltransferase activity"/>
    <property type="evidence" value="ECO:0007669"/>
    <property type="project" value="UniProtKB-EC"/>
</dbReference>
<dbReference type="GO" id="GO:0046872">
    <property type="term" value="F:metal ion binding"/>
    <property type="evidence" value="ECO:0007669"/>
    <property type="project" value="UniProtKB-KW"/>
</dbReference>
<dbReference type="GO" id="GO:1904047">
    <property type="term" value="F:S-adenosyl-L-methionine binding"/>
    <property type="evidence" value="ECO:0000250"/>
    <property type="project" value="UniProtKB"/>
</dbReference>
<dbReference type="GO" id="GO:0006281">
    <property type="term" value="P:DNA repair"/>
    <property type="evidence" value="ECO:0000250"/>
    <property type="project" value="UniProtKB"/>
</dbReference>
<dbReference type="GO" id="GO:0032259">
    <property type="term" value="P:methylation"/>
    <property type="evidence" value="ECO:0007669"/>
    <property type="project" value="UniProtKB-KW"/>
</dbReference>
<dbReference type="GO" id="GO:2001034">
    <property type="term" value="P:positive regulation of double-strand break repair via nonhomologous end joining"/>
    <property type="evidence" value="ECO:0000250"/>
    <property type="project" value="UniProtKB"/>
</dbReference>
<dbReference type="GO" id="GO:0045830">
    <property type="term" value="P:positive regulation of isotype switching"/>
    <property type="evidence" value="ECO:0000315"/>
    <property type="project" value="UniProtKB"/>
</dbReference>
<dbReference type="CDD" id="cd19185">
    <property type="entry name" value="SET_KMT5C"/>
    <property type="match status" value="1"/>
</dbReference>
<dbReference type="FunFam" id="1.10.10.1700:FF:000001">
    <property type="entry name" value="Histone-lysine N-methyltransferase"/>
    <property type="match status" value="1"/>
</dbReference>
<dbReference type="FunFam" id="2.170.270.10:FF:000006">
    <property type="entry name" value="Histone-lysine N-methyltransferase"/>
    <property type="match status" value="1"/>
</dbReference>
<dbReference type="Gene3D" id="1.10.10.1700">
    <property type="entry name" value="Histone-lysine N-methyltransferase"/>
    <property type="match status" value="1"/>
</dbReference>
<dbReference type="Gene3D" id="2.170.270.10">
    <property type="entry name" value="SET domain"/>
    <property type="match status" value="1"/>
</dbReference>
<dbReference type="InterPro" id="IPR041938">
    <property type="entry name" value="Hist-Lys_N-MTase_N"/>
</dbReference>
<dbReference type="InterPro" id="IPR044425">
    <property type="entry name" value="KMT5C_SET"/>
</dbReference>
<dbReference type="InterPro" id="IPR001214">
    <property type="entry name" value="SET_dom"/>
</dbReference>
<dbReference type="InterPro" id="IPR046341">
    <property type="entry name" value="SET_dom_sf"/>
</dbReference>
<dbReference type="InterPro" id="IPR039977">
    <property type="entry name" value="Suv4-20/Set9"/>
</dbReference>
<dbReference type="InterPro" id="IPR025790">
    <property type="entry name" value="Suv4-20_animal"/>
</dbReference>
<dbReference type="PANTHER" id="PTHR12977:SF11">
    <property type="entry name" value="HISTONE-LYSINE N-METHYLTRANSFERASE KMT5C"/>
    <property type="match status" value="1"/>
</dbReference>
<dbReference type="PANTHER" id="PTHR12977">
    <property type="entry name" value="SUPPRESSOR OF VARIEGATION 4-20-RELATED"/>
    <property type="match status" value="1"/>
</dbReference>
<dbReference type="Pfam" id="PF00856">
    <property type="entry name" value="SET"/>
    <property type="match status" value="1"/>
</dbReference>
<dbReference type="SMART" id="SM00317">
    <property type="entry name" value="SET"/>
    <property type="match status" value="1"/>
</dbReference>
<dbReference type="SUPFAM" id="SSF82199">
    <property type="entry name" value="SET domain"/>
    <property type="match status" value="1"/>
</dbReference>
<dbReference type="PROSITE" id="PS51570">
    <property type="entry name" value="SAM_MT43_SUVAR420_2"/>
    <property type="match status" value="1"/>
</dbReference>
<dbReference type="PROSITE" id="PS50280">
    <property type="entry name" value="SET"/>
    <property type="match status" value="1"/>
</dbReference>
<reference key="1">
    <citation type="journal article" date="2004" name="Genes Dev.">
        <title>A silencing pathway to induce H3-K9 and H4-K20 trimethylation at constitutive heterochromatin.</title>
        <authorList>
            <person name="Schotta G."/>
            <person name="Lachner M."/>
            <person name="Sarma K."/>
            <person name="Ebert A."/>
            <person name="Sengupta R."/>
            <person name="Reuter G."/>
            <person name="Reinberg D."/>
            <person name="Jenuwein T."/>
        </authorList>
    </citation>
    <scope>NUCLEOTIDE SEQUENCE [MRNA]</scope>
    <scope>FUNCTION</scope>
    <scope>CATALYTIC ACTIVITY</scope>
    <scope>SUBCELLULAR LOCATION</scope>
    <scope>INTERACTION WITH CBX1; CBX3 AND CBX5</scope>
    <source>
        <strain>FVB/N</strain>
    </source>
</reference>
<reference key="2">
    <citation type="journal article" date="2005" name="Science">
        <title>The transcriptional landscape of the mammalian genome.</title>
        <authorList>
            <person name="Carninci P."/>
            <person name="Kasukawa T."/>
            <person name="Katayama S."/>
            <person name="Gough J."/>
            <person name="Frith M.C."/>
            <person name="Maeda N."/>
            <person name="Oyama R."/>
            <person name="Ravasi T."/>
            <person name="Lenhard B."/>
            <person name="Wells C."/>
            <person name="Kodzius R."/>
            <person name="Shimokawa K."/>
            <person name="Bajic V.B."/>
            <person name="Brenner S.E."/>
            <person name="Batalov S."/>
            <person name="Forrest A.R."/>
            <person name="Zavolan M."/>
            <person name="Davis M.J."/>
            <person name="Wilming L.G."/>
            <person name="Aidinis V."/>
            <person name="Allen J.E."/>
            <person name="Ambesi-Impiombato A."/>
            <person name="Apweiler R."/>
            <person name="Aturaliya R.N."/>
            <person name="Bailey T.L."/>
            <person name="Bansal M."/>
            <person name="Baxter L."/>
            <person name="Beisel K.W."/>
            <person name="Bersano T."/>
            <person name="Bono H."/>
            <person name="Chalk A.M."/>
            <person name="Chiu K.P."/>
            <person name="Choudhary V."/>
            <person name="Christoffels A."/>
            <person name="Clutterbuck D.R."/>
            <person name="Crowe M.L."/>
            <person name="Dalla E."/>
            <person name="Dalrymple B.P."/>
            <person name="de Bono B."/>
            <person name="Della Gatta G."/>
            <person name="di Bernardo D."/>
            <person name="Down T."/>
            <person name="Engstrom P."/>
            <person name="Fagiolini M."/>
            <person name="Faulkner G."/>
            <person name="Fletcher C.F."/>
            <person name="Fukushima T."/>
            <person name="Furuno M."/>
            <person name="Futaki S."/>
            <person name="Gariboldi M."/>
            <person name="Georgii-Hemming P."/>
            <person name="Gingeras T.R."/>
            <person name="Gojobori T."/>
            <person name="Green R.E."/>
            <person name="Gustincich S."/>
            <person name="Harbers M."/>
            <person name="Hayashi Y."/>
            <person name="Hensch T.K."/>
            <person name="Hirokawa N."/>
            <person name="Hill D."/>
            <person name="Huminiecki L."/>
            <person name="Iacono M."/>
            <person name="Ikeo K."/>
            <person name="Iwama A."/>
            <person name="Ishikawa T."/>
            <person name="Jakt M."/>
            <person name="Kanapin A."/>
            <person name="Katoh M."/>
            <person name="Kawasawa Y."/>
            <person name="Kelso J."/>
            <person name="Kitamura H."/>
            <person name="Kitano H."/>
            <person name="Kollias G."/>
            <person name="Krishnan S.P."/>
            <person name="Kruger A."/>
            <person name="Kummerfeld S.K."/>
            <person name="Kurochkin I.V."/>
            <person name="Lareau L.F."/>
            <person name="Lazarevic D."/>
            <person name="Lipovich L."/>
            <person name="Liu J."/>
            <person name="Liuni S."/>
            <person name="McWilliam S."/>
            <person name="Madan Babu M."/>
            <person name="Madera M."/>
            <person name="Marchionni L."/>
            <person name="Matsuda H."/>
            <person name="Matsuzawa S."/>
            <person name="Miki H."/>
            <person name="Mignone F."/>
            <person name="Miyake S."/>
            <person name="Morris K."/>
            <person name="Mottagui-Tabar S."/>
            <person name="Mulder N."/>
            <person name="Nakano N."/>
            <person name="Nakauchi H."/>
            <person name="Ng P."/>
            <person name="Nilsson R."/>
            <person name="Nishiguchi S."/>
            <person name="Nishikawa S."/>
            <person name="Nori F."/>
            <person name="Ohara O."/>
            <person name="Okazaki Y."/>
            <person name="Orlando V."/>
            <person name="Pang K.C."/>
            <person name="Pavan W.J."/>
            <person name="Pavesi G."/>
            <person name="Pesole G."/>
            <person name="Petrovsky N."/>
            <person name="Piazza S."/>
            <person name="Reed J."/>
            <person name="Reid J.F."/>
            <person name="Ring B.Z."/>
            <person name="Ringwald M."/>
            <person name="Rost B."/>
            <person name="Ruan Y."/>
            <person name="Salzberg S.L."/>
            <person name="Sandelin A."/>
            <person name="Schneider C."/>
            <person name="Schoenbach C."/>
            <person name="Sekiguchi K."/>
            <person name="Semple C.A."/>
            <person name="Seno S."/>
            <person name="Sessa L."/>
            <person name="Sheng Y."/>
            <person name="Shibata Y."/>
            <person name="Shimada H."/>
            <person name="Shimada K."/>
            <person name="Silva D."/>
            <person name="Sinclair B."/>
            <person name="Sperling S."/>
            <person name="Stupka E."/>
            <person name="Sugiura K."/>
            <person name="Sultana R."/>
            <person name="Takenaka Y."/>
            <person name="Taki K."/>
            <person name="Tammoja K."/>
            <person name="Tan S.L."/>
            <person name="Tang S."/>
            <person name="Taylor M.S."/>
            <person name="Tegner J."/>
            <person name="Teichmann S.A."/>
            <person name="Ueda H.R."/>
            <person name="van Nimwegen E."/>
            <person name="Verardo R."/>
            <person name="Wei C.L."/>
            <person name="Yagi K."/>
            <person name="Yamanishi H."/>
            <person name="Zabarovsky E."/>
            <person name="Zhu S."/>
            <person name="Zimmer A."/>
            <person name="Hide W."/>
            <person name="Bult C."/>
            <person name="Grimmond S.M."/>
            <person name="Teasdale R.D."/>
            <person name="Liu E.T."/>
            <person name="Brusic V."/>
            <person name="Quackenbush J."/>
            <person name="Wahlestedt C."/>
            <person name="Mattick J.S."/>
            <person name="Hume D.A."/>
            <person name="Kai C."/>
            <person name="Sasaki D."/>
            <person name="Tomaru Y."/>
            <person name="Fukuda S."/>
            <person name="Kanamori-Katayama M."/>
            <person name="Suzuki M."/>
            <person name="Aoki J."/>
            <person name="Arakawa T."/>
            <person name="Iida J."/>
            <person name="Imamura K."/>
            <person name="Itoh M."/>
            <person name="Kato T."/>
            <person name="Kawaji H."/>
            <person name="Kawagashira N."/>
            <person name="Kawashima T."/>
            <person name="Kojima M."/>
            <person name="Kondo S."/>
            <person name="Konno H."/>
            <person name="Nakano K."/>
            <person name="Ninomiya N."/>
            <person name="Nishio T."/>
            <person name="Okada M."/>
            <person name="Plessy C."/>
            <person name="Shibata K."/>
            <person name="Shiraki T."/>
            <person name="Suzuki S."/>
            <person name="Tagami M."/>
            <person name="Waki K."/>
            <person name="Watahiki A."/>
            <person name="Okamura-Oho Y."/>
            <person name="Suzuki H."/>
            <person name="Kawai J."/>
            <person name="Hayashizaki Y."/>
        </authorList>
    </citation>
    <scope>NUCLEOTIDE SEQUENCE [LARGE SCALE MRNA]</scope>
    <source>
        <strain>NOD</strain>
        <tissue>Dendritic cell</tissue>
    </source>
</reference>
<reference key="3">
    <citation type="journal article" date="2004" name="Genome Res.">
        <title>The status, quality, and expansion of the NIH full-length cDNA project: the Mammalian Gene Collection (MGC).</title>
        <authorList>
            <consortium name="The MGC Project Team"/>
        </authorList>
    </citation>
    <scope>NUCLEOTIDE SEQUENCE [LARGE SCALE MRNA]</scope>
    <source>
        <strain>C57BL/6J</strain>
        <tissue>Brain</tissue>
        <tissue>Eye</tissue>
    </source>
</reference>
<reference key="4">
    <citation type="journal article" date="2005" name="Nat. Cell Biol.">
        <title>Role of the RB1 family in stabilizing histone methylation at constitutive heterochromatin.</title>
        <authorList>
            <person name="Gonzalo S."/>
            <person name="Garcia-Cao M."/>
            <person name="Fraga M.F."/>
            <person name="Schotta G."/>
            <person name="Peters A.H.F.M."/>
            <person name="Cotter S.E."/>
            <person name="Eguia R."/>
            <person name="Dean D.C."/>
            <person name="Esteller M."/>
            <person name="Jenuwein T."/>
            <person name="Blasco M.A."/>
        </authorList>
    </citation>
    <scope>INTERACTION WITH RB1; RBL1 AND RBL2</scope>
</reference>
<reference key="5">
    <citation type="journal article" date="2006" name="Mol. Cell. Biol.">
        <title>The retinoblastoma protein regulates pericentric heterochromatin.</title>
        <authorList>
            <person name="Isaac C.E."/>
            <person name="Francis S.M."/>
            <person name="Martens A.L."/>
            <person name="Julian L.M."/>
            <person name="Seifried L.A."/>
            <person name="Erdmann N."/>
            <person name="Binne U.K."/>
            <person name="Harrington L."/>
            <person name="Sicinski P."/>
            <person name="Berube N.G."/>
            <person name="Dyson N.J."/>
            <person name="Dick F.A."/>
        </authorList>
    </citation>
    <scope>INTERACTION WITH RB1; RBL1 AND RBL2</scope>
</reference>
<reference key="6">
    <citation type="journal article" date="2017" name="Nat. Chem. Biol.">
        <title>The SUV4-20 inhibitor A-196 verifies a role for epigenetics in genomic integrity.</title>
        <authorList>
            <person name="Bromberg K.D."/>
            <person name="Mitchell T.R."/>
            <person name="Upadhyay A.K."/>
            <person name="Jakob C.G."/>
            <person name="Jhala M.A."/>
            <person name="Comess K.M."/>
            <person name="Lasko L.M."/>
            <person name="Li C."/>
            <person name="Tuzon C.T."/>
            <person name="Dai Y."/>
            <person name="Li F."/>
            <person name="Eram M.S."/>
            <person name="Nuber A."/>
            <person name="Soni N.B."/>
            <person name="Manaves V."/>
            <person name="Algire M.A."/>
            <person name="Sweis R.F."/>
            <person name="Torrent M."/>
            <person name="Schotta G."/>
            <person name="Sun C."/>
            <person name="Michaelides M.R."/>
            <person name="Shoemaker A.R."/>
            <person name="Arrowsmith C.H."/>
            <person name="Brown P.J."/>
            <person name="Santhakumar V."/>
            <person name="Martin A."/>
            <person name="Rice J.C."/>
            <person name="Chiang G.G."/>
            <person name="Vedadi M."/>
            <person name="Barsyte-Lovejoy D."/>
            <person name="Pappano W.N."/>
        </authorList>
    </citation>
    <scope>FUNCTION</scope>
    <scope>CATALYTIC ACTIVITY</scope>
</reference>
<reference evidence="10" key="7">
    <citation type="journal article" date="2014" name="Nucleic Acids Res.">
        <title>A novel route to product specificity in the Suv4-20 family of histone H4K20 methyltransferases.</title>
        <authorList>
            <person name="Southall S.M."/>
            <person name="Cronin N.B."/>
            <person name="Wilson J.R."/>
        </authorList>
    </citation>
    <scope>X-RAY CRYSTALLOGRAPHY (2.07 ANGSTROMS) OF 1-246 IN COMPLEX WITH S-ADENOSYL-L-METHIONINE; HISTONE H4 PEPTIDE AND ZINC</scope>
    <scope>SUBUNIT</scope>
    <scope>MUTAGENESIS OF MET-116 AND SER-161</scope>
    <scope>CATALYTIC ACTIVITY</scope>
    <scope>BIOPHYSICOCHEMICAL PROPERTIES</scope>
</reference>
<name>KMT5C_MOUSE</name>
<organism>
    <name type="scientific">Mus musculus</name>
    <name type="common">Mouse</name>
    <dbReference type="NCBI Taxonomy" id="10090"/>
    <lineage>
        <taxon>Eukaryota</taxon>
        <taxon>Metazoa</taxon>
        <taxon>Chordata</taxon>
        <taxon>Craniata</taxon>
        <taxon>Vertebrata</taxon>
        <taxon>Euteleostomi</taxon>
        <taxon>Mammalia</taxon>
        <taxon>Eutheria</taxon>
        <taxon>Euarchontoglires</taxon>
        <taxon>Glires</taxon>
        <taxon>Rodentia</taxon>
        <taxon>Myomorpha</taxon>
        <taxon>Muroidea</taxon>
        <taxon>Muridae</taxon>
        <taxon>Murinae</taxon>
        <taxon>Mus</taxon>
        <taxon>Mus</taxon>
    </lineage>
</organism>
<gene>
    <name evidence="1" type="primary">Kmt5c</name>
    <name type="synonym">Suv420h2</name>
</gene>
<evidence type="ECO:0000250" key="1">
    <source>
        <dbReference type="UniProtKB" id="Q86Y97"/>
    </source>
</evidence>
<evidence type="ECO:0000255" key="2">
    <source>
        <dbReference type="PROSITE-ProRule" id="PRU00190"/>
    </source>
</evidence>
<evidence type="ECO:0000255" key="3">
    <source>
        <dbReference type="PROSITE-ProRule" id="PRU00903"/>
    </source>
</evidence>
<evidence type="ECO:0000269" key="4">
    <source>
    </source>
</evidence>
<evidence type="ECO:0000269" key="5">
    <source>
    </source>
</evidence>
<evidence type="ECO:0000269" key="6">
    <source>
    </source>
</evidence>
<evidence type="ECO:0000269" key="7">
    <source>
    </source>
</evidence>
<evidence type="ECO:0000269" key="8">
    <source>
    </source>
</evidence>
<evidence type="ECO:0000305" key="9"/>
<evidence type="ECO:0007744" key="10">
    <source>
        <dbReference type="PDB" id="4AU7"/>
    </source>
</evidence>
<evidence type="ECO:0007829" key="11">
    <source>
        <dbReference type="PDB" id="4AU7"/>
    </source>
</evidence>
<feature type="chain" id="PRO_0000281794" description="Histone-lysine N-methyltransferase KMT5C">
    <location>
        <begin position="1"/>
        <end position="468"/>
    </location>
</feature>
<feature type="domain" description="SET" evidence="2">
    <location>
        <begin position="104"/>
        <end position="218"/>
    </location>
</feature>
<feature type="region of interest" description="Histone H4 binding" evidence="7 10">
    <location>
        <begin position="150"/>
        <end position="166"/>
    </location>
</feature>
<feature type="region of interest" description="Required for heterochromatin localization">
    <location>
        <begin position="348"/>
        <end position="441"/>
    </location>
</feature>
<feature type="binding site" evidence="7 10">
    <location>
        <position position="32"/>
    </location>
    <ligand>
        <name>S-adenosyl-L-methionine</name>
        <dbReference type="ChEBI" id="CHEBI:59789"/>
    </ligand>
</feature>
<feature type="binding site" evidence="10">
    <location>
        <position position="92"/>
    </location>
    <ligand>
        <name>Zn(2+)</name>
        <dbReference type="ChEBI" id="CHEBI:29105"/>
        <label>1</label>
    </ligand>
</feature>
<feature type="binding site" evidence="7 10">
    <location>
        <position position="95"/>
    </location>
    <ligand>
        <name>Zn(2+)</name>
        <dbReference type="ChEBI" id="CHEBI:29105"/>
        <label>1</label>
    </ligand>
</feature>
<feature type="binding site" evidence="1">
    <location>
        <begin position="114"/>
        <end position="117"/>
    </location>
    <ligand>
        <name>S-adenosyl-L-methionine</name>
        <dbReference type="ChEBI" id="CHEBI:59789"/>
    </ligand>
</feature>
<feature type="binding site" evidence="7 10">
    <location>
        <position position="121"/>
    </location>
    <ligand>
        <name>S-adenosyl-L-methionine</name>
        <dbReference type="ChEBI" id="CHEBI:59789"/>
    </ligand>
</feature>
<feature type="binding site" evidence="7 10">
    <location>
        <position position="141"/>
    </location>
    <ligand>
        <name>Zn(2+)</name>
        <dbReference type="ChEBI" id="CHEBI:29105"/>
        <label>1</label>
    </ligand>
</feature>
<feature type="binding site" evidence="1">
    <location>
        <position position="160"/>
    </location>
    <ligand>
        <name>S-adenosyl-L-methionine</name>
        <dbReference type="ChEBI" id="CHEBI:59789"/>
    </ligand>
</feature>
<feature type="binding site" evidence="1">
    <location>
        <position position="169"/>
    </location>
    <ligand>
        <name>S-adenosyl-L-methionine</name>
        <dbReference type="ChEBI" id="CHEBI:59789"/>
    </ligand>
</feature>
<feature type="binding site" evidence="7 10">
    <location>
        <begin position="182"/>
        <end position="183"/>
    </location>
    <ligand>
        <name>S-adenosyl-L-methionine</name>
        <dbReference type="ChEBI" id="CHEBI:59789"/>
    </ligand>
</feature>
<feature type="binding site" evidence="7 10">
    <location>
        <position position="185"/>
    </location>
    <ligand>
        <name>Zn(2+)</name>
        <dbReference type="ChEBI" id="CHEBI:29105"/>
        <label>2</label>
    </ligand>
</feature>
<feature type="binding site" evidence="1">
    <location>
        <position position="185"/>
    </location>
    <ligand>
        <name>Zn(2+)</name>
        <dbReference type="ChEBI" id="CHEBI:29105"/>
    </ligand>
</feature>
<feature type="binding site" evidence="7 10">
    <location>
        <position position="229"/>
    </location>
    <ligand>
        <name>Zn(2+)</name>
        <dbReference type="ChEBI" id="CHEBI:29105"/>
        <label>2</label>
    </ligand>
</feature>
<feature type="binding site" evidence="1">
    <location>
        <position position="229"/>
    </location>
    <ligand>
        <name>Zn(2+)</name>
        <dbReference type="ChEBI" id="CHEBI:29105"/>
    </ligand>
</feature>
<feature type="binding site" evidence="7 10">
    <location>
        <position position="230"/>
    </location>
    <ligand>
        <name>S-adenosyl-L-methionine</name>
        <dbReference type="ChEBI" id="CHEBI:59789"/>
    </ligand>
</feature>
<feature type="binding site" evidence="7 10">
    <location>
        <position position="231"/>
    </location>
    <ligand>
        <name>Zn(2+)</name>
        <dbReference type="ChEBI" id="CHEBI:29105"/>
        <label>2</label>
    </ligand>
</feature>
<feature type="binding site" evidence="1">
    <location>
        <position position="231"/>
    </location>
    <ligand>
        <name>Zn(2+)</name>
        <dbReference type="ChEBI" id="CHEBI:29105"/>
    </ligand>
</feature>
<feature type="binding site" evidence="7 10">
    <location>
        <position position="234"/>
    </location>
    <ligand>
        <name>Zn(2+)</name>
        <dbReference type="ChEBI" id="CHEBI:29105"/>
        <label>2</label>
    </ligand>
</feature>
<feature type="binding site" evidence="1">
    <location>
        <position position="234"/>
    </location>
    <ligand>
        <name>Zn(2+)</name>
        <dbReference type="ChEBI" id="CHEBI:29105"/>
    </ligand>
</feature>
<feature type="site" description="Histone H4 binding; via carbonyl oxygen" evidence="7 10">
    <location>
        <position position="217"/>
    </location>
</feature>
<feature type="mutagenesis site" description="Does not affect affinity for S-adenosyl-L-methionine." evidence="7">
    <original>M</original>
    <variation>S</variation>
    <location>
        <position position="116"/>
    </location>
</feature>
<feature type="mutagenesis site" description="Does not methylate either an unmodified or monomethylated H4K20 substrate. Methylates a di-methylated H4K20 peptide." evidence="7">
    <original>S</original>
    <variation>A</variation>
    <location>
        <position position="161"/>
    </location>
</feature>
<feature type="helix" evidence="11">
    <location>
        <begin position="8"/>
        <end position="21"/>
    </location>
</feature>
<feature type="helix" evidence="11">
    <location>
        <begin position="23"/>
        <end position="27"/>
    </location>
</feature>
<feature type="helix" evidence="11">
    <location>
        <begin position="45"/>
        <end position="58"/>
    </location>
</feature>
<feature type="helix" evidence="11">
    <location>
        <begin position="61"/>
        <end position="68"/>
    </location>
</feature>
<feature type="helix" evidence="11">
    <location>
        <begin position="74"/>
        <end position="77"/>
    </location>
</feature>
<feature type="turn" evidence="11">
    <location>
        <begin position="78"/>
        <end position="81"/>
    </location>
</feature>
<feature type="helix" evidence="11">
    <location>
        <begin position="83"/>
        <end position="99"/>
    </location>
</feature>
<feature type="helix" evidence="11">
    <location>
        <begin position="102"/>
        <end position="104"/>
    </location>
</feature>
<feature type="strand" evidence="11">
    <location>
        <begin position="106"/>
        <end position="111"/>
    </location>
</feature>
<feature type="strand" evidence="11">
    <location>
        <begin position="118"/>
        <end position="127"/>
    </location>
</feature>
<feature type="strand" evidence="11">
    <location>
        <begin position="134"/>
        <end position="144"/>
    </location>
</feature>
<feature type="helix" evidence="11">
    <location>
        <begin position="147"/>
        <end position="152"/>
    </location>
</feature>
<feature type="turn" evidence="11">
    <location>
        <begin position="155"/>
        <end position="157"/>
    </location>
</feature>
<feature type="strand" evidence="11">
    <location>
        <begin position="160"/>
        <end position="165"/>
    </location>
</feature>
<feature type="turn" evidence="11">
    <location>
        <begin position="166"/>
        <end position="169"/>
    </location>
</feature>
<feature type="strand" evidence="11">
    <location>
        <begin position="170"/>
        <end position="176"/>
    </location>
</feature>
<feature type="helix" evidence="11">
    <location>
        <begin position="177"/>
        <end position="180"/>
    </location>
</feature>
<feature type="strand" evidence="11">
    <location>
        <begin position="188"/>
        <end position="193"/>
    </location>
</feature>
<feature type="strand" evidence="11">
    <location>
        <begin position="195"/>
        <end position="205"/>
    </location>
</feature>
<feature type="turn" evidence="11">
    <location>
        <begin position="219"/>
        <end position="222"/>
    </location>
</feature>
<feature type="helix" evidence="11">
    <location>
        <begin position="232"/>
        <end position="237"/>
    </location>
</feature>
<feature type="helix" evidence="11">
    <location>
        <begin position="240"/>
        <end position="243"/>
    </location>
</feature>
<sequence length="468" mass="53159">MGPDRVTARELCENDDLATSLVLDPYLGFRTHKMNVSPVPTLRRQHHLRSALEAFLRQRDLEAAFRALTLGGWMAHYFQSRAPRQEAALKTHIFCYLRAFLPESGFTILPCTRYSMETNGAKIVSTRAWKKNEKLELLVGCIAELREEDEDLLRAGENDFSIMYSTRKRSAQLWLGPAAFINHDCKPNCKFVPSDGNTACVKVLRDIEPGDEVTCFYGEGFFGEKNEHCECYTCERKGEGAFRLQPREPELRPKPLDKYELRETKRRLQQGLVSSQQSLMSRWACSHLSPLRPDPFCAACQPSCLLPASPHMDYLPLWLQRAPQPQPIVPPRKRHRRRRPRIRQASLPPVLRTACVPLHRWGGCGPHCQLRAEAMVTLHLRPQTRWTPQQDWYWARRYGLPSVGRVELTRLAPALPAAPAPAGNPGPVPTPDFIPKQALAFAPFCPPKRLRLVVSHGSIDLDINSGEP</sequence>
<accession>Q6Q783</accession>
<accession>Q5RKP6</accession>
<accession>Q8R1C5</accession>